<reference key="1">
    <citation type="journal article" date="2002" name="J. Bacteriol.">
        <title>Whole-genome comparison of Mycobacterium tuberculosis clinical and laboratory strains.</title>
        <authorList>
            <person name="Fleischmann R.D."/>
            <person name="Alland D."/>
            <person name="Eisen J.A."/>
            <person name="Carpenter L."/>
            <person name="White O."/>
            <person name="Peterson J.D."/>
            <person name="DeBoy R.T."/>
            <person name="Dodson R.J."/>
            <person name="Gwinn M.L."/>
            <person name="Haft D.H."/>
            <person name="Hickey E.K."/>
            <person name="Kolonay J.F."/>
            <person name="Nelson W.C."/>
            <person name="Umayam L.A."/>
            <person name="Ermolaeva M.D."/>
            <person name="Salzberg S.L."/>
            <person name="Delcher A."/>
            <person name="Utterback T.R."/>
            <person name="Weidman J.F."/>
            <person name="Khouri H.M."/>
            <person name="Gill J."/>
            <person name="Mikula A."/>
            <person name="Bishai W."/>
            <person name="Jacobs W.R. Jr."/>
            <person name="Venter J.C."/>
            <person name="Fraser C.M."/>
        </authorList>
    </citation>
    <scope>NUCLEOTIDE SEQUENCE [LARGE SCALE GENOMIC DNA]</scope>
    <source>
        <strain>CDC 1551 / Oshkosh</strain>
    </source>
</reference>
<comment type="subcellular location">
    <subcellularLocation>
        <location evidence="2">Cell membrane</location>
        <topology evidence="2">Lipid-anchor</topology>
    </subcellularLocation>
</comment>
<comment type="similarity">
    <text evidence="2">Belongs to the mycobacteriales LppA/LppB family.</text>
</comment>
<protein>
    <recommendedName>
        <fullName>Putative lipoprotein LppB</fullName>
    </recommendedName>
</protein>
<organism>
    <name type="scientific">Mycobacterium tuberculosis (strain CDC 1551 / Oshkosh)</name>
    <dbReference type="NCBI Taxonomy" id="83331"/>
    <lineage>
        <taxon>Bacteria</taxon>
        <taxon>Bacillati</taxon>
        <taxon>Actinomycetota</taxon>
        <taxon>Actinomycetes</taxon>
        <taxon>Mycobacteriales</taxon>
        <taxon>Mycobacteriaceae</taxon>
        <taxon>Mycobacterium</taxon>
        <taxon>Mycobacterium tuberculosis complex</taxon>
    </lineage>
</organism>
<proteinExistence type="inferred from homology"/>
<evidence type="ECO:0000255" key="1"/>
<evidence type="ECO:0000305" key="2"/>
<sequence length="220" mass="24193">MIAPQPIPRTLPRWQRIVALTMIGISTALIGGCTMGQNPDKSPHLTGEQKIQLIDSMRHKGSYEAARERLTATAQIIADRVSAAIPGQTWKFNDDSYGQDFYRNGSLCKELSADIARRPMAKPVDFGSTFSAEDFKIAANIVREEAAKYGVTTESSLFNESAKRDYDVQGNGYEFNLGQIKFATLNITGDCFLLQKVLDLPAGQLPPEPPIWPTTSTPTP</sequence>
<feature type="signal peptide" evidence="1">
    <location>
        <begin position="1"/>
        <end position="32"/>
    </location>
</feature>
<feature type="chain" id="PRO_0000427701" description="Putative lipoprotein LppB">
    <location>
        <begin position="33"/>
        <end position="220"/>
    </location>
</feature>
<feature type="lipid moiety-binding region" description="N-palmitoyl cysteine" evidence="1">
    <location>
        <position position="33"/>
    </location>
</feature>
<feature type="lipid moiety-binding region" description="S-diacylglycerol cysteine" evidence="1">
    <location>
        <position position="33"/>
    </location>
</feature>
<name>LPPB_MYCTO</name>
<accession>P9WK78</accession>
<accession>L0TBI8</accession>
<accession>P95009</accession>
<accession>Q7D6Y3</accession>
<dbReference type="EMBL" id="AE000516">
    <property type="protein sequence ID" value="AAK46931.1"/>
    <property type="molecule type" value="Genomic_DNA"/>
</dbReference>
<dbReference type="PIR" id="D70659">
    <property type="entry name" value="D70659"/>
</dbReference>
<dbReference type="RefSeq" id="WP_003900848.1">
    <property type="nucleotide sequence ID" value="NZ_KK341227.1"/>
</dbReference>
<dbReference type="SMR" id="P9WK78"/>
<dbReference type="KEGG" id="mtc:MT2620"/>
<dbReference type="PATRIC" id="fig|83331.31.peg.2826"/>
<dbReference type="HOGENOM" id="CLU_097903_0_0_11"/>
<dbReference type="Proteomes" id="UP000001020">
    <property type="component" value="Chromosome"/>
</dbReference>
<dbReference type="GO" id="GO:0005886">
    <property type="term" value="C:plasma membrane"/>
    <property type="evidence" value="ECO:0007669"/>
    <property type="project" value="UniProtKB-SubCell"/>
</dbReference>
<dbReference type="FunFam" id="3.30.2030.20:FF:000001">
    <property type="entry name" value="Putative lipoprotein LppB"/>
    <property type="match status" value="1"/>
</dbReference>
<dbReference type="Gene3D" id="3.30.2030.20">
    <property type="match status" value="1"/>
</dbReference>
<dbReference type="InterPro" id="IPR032018">
    <property type="entry name" value="LppA/LppB/LprP"/>
</dbReference>
<dbReference type="Pfam" id="PF16708">
    <property type="entry name" value="LppA"/>
    <property type="match status" value="1"/>
</dbReference>
<keyword id="KW-1003">Cell membrane</keyword>
<keyword id="KW-0449">Lipoprotein</keyword>
<keyword id="KW-0472">Membrane</keyword>
<keyword id="KW-0564">Palmitate</keyword>
<keyword id="KW-1185">Reference proteome</keyword>
<keyword id="KW-0732">Signal</keyword>
<gene>
    <name type="primary">lppB</name>
    <name type="ordered locus">MT2620</name>
</gene>